<organism evidence="14">
    <name type="scientific">Caenorhabditis elegans</name>
    <dbReference type="NCBI Taxonomy" id="6239"/>
    <lineage>
        <taxon>Eukaryota</taxon>
        <taxon>Metazoa</taxon>
        <taxon>Ecdysozoa</taxon>
        <taxon>Nematoda</taxon>
        <taxon>Chromadorea</taxon>
        <taxon>Rhabditida</taxon>
        <taxon>Rhabditina</taxon>
        <taxon>Rhabditomorpha</taxon>
        <taxon>Rhabditoidea</taxon>
        <taxon>Rhabditidae</taxon>
        <taxon>Peloderinae</taxon>
        <taxon>Caenorhabditis</taxon>
    </lineage>
</organism>
<proteinExistence type="evidence at protein level"/>
<gene>
    <name evidence="15" type="primary">hcf-1</name>
    <name evidence="15" type="ORF">C46A5.9</name>
</gene>
<accession>G5EC23</accession>
<keyword id="KW-0880">Kelch repeat</keyword>
<keyword id="KW-0539">Nucleus</keyword>
<keyword id="KW-0597">Phosphoprotein</keyword>
<keyword id="KW-1185">Reference proteome</keyword>
<keyword id="KW-0677">Repeat</keyword>
<evidence type="ECO:0000255" key="1"/>
<evidence type="ECO:0000256" key="2">
    <source>
        <dbReference type="SAM" id="MobiDB-lite"/>
    </source>
</evidence>
<evidence type="ECO:0000269" key="3">
    <source>
    </source>
</evidence>
<evidence type="ECO:0000269" key="4">
    <source>
    </source>
</evidence>
<evidence type="ECO:0000269" key="5">
    <source>
    </source>
</evidence>
<evidence type="ECO:0000269" key="6">
    <source>
    </source>
</evidence>
<evidence type="ECO:0000269" key="7">
    <source>
    </source>
</evidence>
<evidence type="ECO:0000269" key="8">
    <source>
    </source>
</evidence>
<evidence type="ECO:0000269" key="9">
    <source>
    </source>
</evidence>
<evidence type="ECO:0000269" key="10">
    <source>
    </source>
</evidence>
<evidence type="ECO:0000303" key="11">
    <source>
    </source>
</evidence>
<evidence type="ECO:0000305" key="12"/>
<evidence type="ECO:0000312" key="13">
    <source>
        <dbReference type="EMBL" id="AAD12580.1"/>
    </source>
</evidence>
<evidence type="ECO:0000312" key="14">
    <source>
        <dbReference type="Proteomes" id="UP000001940"/>
    </source>
</evidence>
<evidence type="ECO:0000312" key="15">
    <source>
        <dbReference type="WormBase" id="C46A5.9"/>
    </source>
</evidence>
<dbReference type="EMBL" id="AF072907">
    <property type="protein sequence ID" value="AAD12580.1"/>
    <property type="molecule type" value="mRNA"/>
</dbReference>
<dbReference type="EMBL" id="BX284604">
    <property type="protein sequence ID" value="CCD66593.1"/>
    <property type="molecule type" value="Genomic_DNA"/>
</dbReference>
<dbReference type="PIR" id="T29816">
    <property type="entry name" value="T29816"/>
</dbReference>
<dbReference type="PIR" id="T43277">
    <property type="entry name" value="T43277"/>
</dbReference>
<dbReference type="RefSeq" id="NP_501279.1">
    <property type="nucleotide sequence ID" value="NM_068878.5"/>
</dbReference>
<dbReference type="SMR" id="G5EC23"/>
<dbReference type="FunCoup" id="G5EC23">
    <property type="interactions" value="2808"/>
</dbReference>
<dbReference type="IntAct" id="G5EC23">
    <property type="interactions" value="3"/>
</dbReference>
<dbReference type="STRING" id="6239.C46A5.9.1"/>
<dbReference type="iPTMnet" id="G5EC23"/>
<dbReference type="PaxDb" id="6239-C46A5.9"/>
<dbReference type="PeptideAtlas" id="G5EC23"/>
<dbReference type="EnsemblMetazoa" id="C46A5.9.1">
    <property type="protein sequence ID" value="C46A5.9.1"/>
    <property type="gene ID" value="WBGene00001827"/>
</dbReference>
<dbReference type="GeneID" id="177560"/>
<dbReference type="KEGG" id="cel:CELE_C46A5.9"/>
<dbReference type="AGR" id="WB:WBGene00001827"/>
<dbReference type="CTD" id="177560"/>
<dbReference type="WormBase" id="C46A5.9">
    <property type="protein sequence ID" value="CE26914"/>
    <property type="gene ID" value="WBGene00001827"/>
    <property type="gene designation" value="hcf-1"/>
</dbReference>
<dbReference type="eggNOG" id="KOG4152">
    <property type="taxonomic scope" value="Eukaryota"/>
</dbReference>
<dbReference type="GeneTree" id="ENSGT00940000166952"/>
<dbReference type="HOGENOM" id="CLU_002603_1_0_1"/>
<dbReference type="InParanoid" id="G5EC23"/>
<dbReference type="OMA" id="QVCCRDM"/>
<dbReference type="OrthoDB" id="10001928at2759"/>
<dbReference type="PhylomeDB" id="G5EC23"/>
<dbReference type="Reactome" id="R-CEL-9772755">
    <property type="pathway name" value="Formation of WDR5-containing histone-modifying complexes"/>
</dbReference>
<dbReference type="PRO" id="PR:G5EC23"/>
<dbReference type="Proteomes" id="UP000001940">
    <property type="component" value="Chromosome IV"/>
</dbReference>
<dbReference type="Bgee" id="WBGene00001827">
    <property type="expression patterns" value="Expressed in embryo and 4 other cell types or tissues"/>
</dbReference>
<dbReference type="GO" id="GO:0035097">
    <property type="term" value="C:histone methyltransferase complex"/>
    <property type="evidence" value="ECO:0000318"/>
    <property type="project" value="GO_Central"/>
</dbReference>
<dbReference type="GO" id="GO:0005634">
    <property type="term" value="C:nucleus"/>
    <property type="evidence" value="ECO:0000314"/>
    <property type="project" value="WormBase"/>
</dbReference>
<dbReference type="GO" id="GO:0005667">
    <property type="term" value="C:transcription regulator complex"/>
    <property type="evidence" value="ECO:0000315"/>
    <property type="project" value="UniProtKB"/>
</dbReference>
<dbReference type="GO" id="GO:0140297">
    <property type="term" value="F:DNA-binding transcription factor binding"/>
    <property type="evidence" value="ECO:0000353"/>
    <property type="project" value="UniProtKB"/>
</dbReference>
<dbReference type="GO" id="GO:0061629">
    <property type="term" value="F:RNA polymerase II-specific DNA-binding transcription factor binding"/>
    <property type="evidence" value="ECO:0000353"/>
    <property type="project" value="WormBase"/>
</dbReference>
<dbReference type="GO" id="GO:0003713">
    <property type="term" value="F:transcription coactivator activity"/>
    <property type="evidence" value="ECO:0000315"/>
    <property type="project" value="UniProtKB"/>
</dbReference>
<dbReference type="GO" id="GO:0001221">
    <property type="term" value="F:transcription coregulator binding"/>
    <property type="evidence" value="ECO:0000353"/>
    <property type="project" value="UniProtKB"/>
</dbReference>
<dbReference type="GO" id="GO:0003714">
    <property type="term" value="F:transcription corepressor activity"/>
    <property type="evidence" value="ECO:0000315"/>
    <property type="project" value="UniProtKB"/>
</dbReference>
<dbReference type="GO" id="GO:0006338">
    <property type="term" value="P:chromatin remodeling"/>
    <property type="evidence" value="ECO:0000318"/>
    <property type="project" value="GO_Central"/>
</dbReference>
<dbReference type="GO" id="GO:0043054">
    <property type="term" value="P:dauer exit"/>
    <property type="evidence" value="ECO:0000316"/>
    <property type="project" value="WormBase"/>
</dbReference>
<dbReference type="GO" id="GO:0098542">
    <property type="term" value="P:defense response to other organism"/>
    <property type="evidence" value="ECO:0000316"/>
    <property type="project" value="UniProtKB"/>
</dbReference>
<dbReference type="GO" id="GO:0008340">
    <property type="term" value="P:determination of adult lifespan"/>
    <property type="evidence" value="ECO:0000315"/>
    <property type="project" value="WormBase"/>
</dbReference>
<dbReference type="GO" id="GO:1900181">
    <property type="term" value="P:negative regulation of protein localization to nucleus"/>
    <property type="evidence" value="ECO:0000315"/>
    <property type="project" value="UniProtKB"/>
</dbReference>
<dbReference type="GO" id="GO:0000122">
    <property type="term" value="P:negative regulation of transcription by RNA polymerase II"/>
    <property type="evidence" value="ECO:0000315"/>
    <property type="project" value="UniProtKB"/>
</dbReference>
<dbReference type="GO" id="GO:0010621">
    <property type="term" value="P:negative regulation of transcription by transcription factor localization"/>
    <property type="evidence" value="ECO:0000315"/>
    <property type="project" value="UniProtKB"/>
</dbReference>
<dbReference type="GO" id="GO:0045944">
    <property type="term" value="P:positive regulation of transcription by RNA polymerase II"/>
    <property type="evidence" value="ECO:0000316"/>
    <property type="project" value="UniProtKB"/>
</dbReference>
<dbReference type="GO" id="GO:0006355">
    <property type="term" value="P:regulation of DNA-templated transcription"/>
    <property type="evidence" value="ECO:0000318"/>
    <property type="project" value="GO_Central"/>
</dbReference>
<dbReference type="GO" id="GO:0046686">
    <property type="term" value="P:response to cadmium ion"/>
    <property type="evidence" value="ECO:0000315"/>
    <property type="project" value="WormBase"/>
</dbReference>
<dbReference type="GO" id="GO:0034976">
    <property type="term" value="P:response to endoplasmic reticulum stress"/>
    <property type="evidence" value="ECO:0000316"/>
    <property type="project" value="UniProtKB"/>
</dbReference>
<dbReference type="GO" id="GO:0006979">
    <property type="term" value="P:response to oxidative stress"/>
    <property type="evidence" value="ECO:0000315"/>
    <property type="project" value="UniProtKB"/>
</dbReference>
<dbReference type="CDD" id="cd00063">
    <property type="entry name" value="FN3"/>
    <property type="match status" value="2"/>
</dbReference>
<dbReference type="FunFam" id="2.120.10.80:FF:000015">
    <property type="entry name" value="host cell factor 1 isoform X1"/>
    <property type="match status" value="1"/>
</dbReference>
<dbReference type="Gene3D" id="6.10.250.2590">
    <property type="match status" value="1"/>
</dbReference>
<dbReference type="Gene3D" id="2.60.40.10">
    <property type="entry name" value="Immunoglobulins"/>
    <property type="match status" value="2"/>
</dbReference>
<dbReference type="Gene3D" id="2.120.10.80">
    <property type="entry name" value="Kelch-type beta propeller"/>
    <property type="match status" value="2"/>
</dbReference>
<dbReference type="InterPro" id="IPR003961">
    <property type="entry name" value="FN3_dom"/>
</dbReference>
<dbReference type="InterPro" id="IPR036116">
    <property type="entry name" value="FN3_sf"/>
</dbReference>
<dbReference type="InterPro" id="IPR043536">
    <property type="entry name" value="HCF1/2"/>
</dbReference>
<dbReference type="InterPro" id="IPR013783">
    <property type="entry name" value="Ig-like_fold"/>
</dbReference>
<dbReference type="InterPro" id="IPR015915">
    <property type="entry name" value="Kelch-typ_b-propeller"/>
</dbReference>
<dbReference type="PANTHER" id="PTHR46003">
    <property type="entry name" value="HOST CELL FACTOR"/>
    <property type="match status" value="1"/>
</dbReference>
<dbReference type="PANTHER" id="PTHR46003:SF1">
    <property type="entry name" value="HOST CELL FACTOR"/>
    <property type="match status" value="1"/>
</dbReference>
<dbReference type="Pfam" id="PF13854">
    <property type="entry name" value="Kelch_HCF"/>
    <property type="match status" value="1"/>
</dbReference>
<dbReference type="SMART" id="SM00060">
    <property type="entry name" value="FN3"/>
    <property type="match status" value="2"/>
</dbReference>
<dbReference type="SUPFAM" id="SSF49265">
    <property type="entry name" value="Fibronectin type III"/>
    <property type="match status" value="1"/>
</dbReference>
<dbReference type="SUPFAM" id="SSF117281">
    <property type="entry name" value="Kelch motif"/>
    <property type="match status" value="1"/>
</dbReference>
<sequence>MDEDVGLEATNYSRGDESRSEEQEKNVVRWRIVQQSTGPNPKPRHGHRAVVLKELIVIFGGGNEGMIDELHAYNTQKREWTAPQCCGDVPTPAAAFGAISLGNKIYRFGGMTEYGKYTNDLYELQSTRWEWRRLNPRVHSNGHLPCPRIGHSFVVSQKSQKAYVFGGLSNDLNDPKRNVPHYLDDLYVINLSGPQHLIWEKLNATGPGPISRESHTAVIYEKDSISRMVVYGGMNGVRLGDLWYLNLNTLHWTEIKFDDPRTGIPPMPRSLHSSVLIGDKMFVYGGWVPLLEHASTEQQTEKEWKCTSSLGCWNITEDRWVPLHLYCSDEDTIPRGRAGHCAAAVGDRMYIWSGRDGYRKAWSNQVCCRDMWLLDTILPEQPGKVQLGRAGFNSLEISWPIVQGASGYFLQIGFGDAKEQSVSPIKRATTSPRKQPSIVPPSQKETEQSPKKPQGTAPSIISTQGTTYTAPADPKPATDEGGLPQDLFEDTEKNETASPKRSNDAQSADSSTCEQKKTDESGLEEDSEKDQKPSDAGETDEMKEENGDDDLPWFDVGIIDKATINVTHYFNDRQQSLEKQLNDLIDHNAFKCVNDSVFTTEDKIPLINGQSYRFRVSAINGLGKGAWSETASCKTCVPGYPSAPSSIRITKSHEGAQLTWEPPSNTNISGKIIEYSVYLAVKNQSANSADSQLAFMRVYCGPQADCQVLQSNLGTAFVDQTNKPAIIFRIAARNEKGYGPATQVRWLQDQQKIPVRTNYPNNSGFIYQQHGGQQKRARFDHQ</sequence>
<comment type="function">
    <text evidence="5 6 7 8 9">Transcriptional coregulator (PubMed:18828672). Involved in control of the cell cycle and in modulating mitotic histone phosphorylation (PubMed:18043729). Plays a role in modulating lifespan by regulating the transcriptional activity of daf-16/Forkhead box protein O, in concert with protein deacetylase sir-2.1/SIRT1, and perhaps acting independently of the Insulin/IGF-1-like signaling (IIS) mediated pathway (PubMed:18828672, PubMed:21909281). Negatively modulates responses to environmental stresses, including oxidative stress, heat stress, and exposure to heavy metals; acting via regulation of the transcription factors daf-16 and skn-1 (PubMed:18828672, PubMed:21909281, PubMed:22568582). May play a role in pharyngeal development via positive modulation of expression of sup-35 (PubMed:19521497).</text>
</comment>
<comment type="subunit">
    <text evidence="6 8">Interacts with daf-16/FOXO (PubMed:18828672). Interacts with deacetylase sir-2.1 (PubMed:21909281). Interacts with the 14-3-3 family proteins ftt-2 and par-5 (PubMed:21909281).</text>
</comment>
<comment type="interaction">
    <interactant intactId="EBI-4480523">
        <id>G5EC23</id>
    </interactant>
    <interactant intactId="EBI-966073">
        <id>Q20655</id>
        <label>ftt-2</label>
    </interactant>
    <organismsDiffer>false</organismsDiffer>
    <experiments>2</experiments>
</comment>
<comment type="interaction">
    <interactant intactId="EBI-4480523">
        <id>G5EC23</id>
    </interactant>
    <interactant intactId="EBI-318108">
        <id>P41932</id>
        <label>par-5</label>
    </interactant>
    <organismsDiffer>false</organismsDiffer>
    <experiments>2</experiments>
</comment>
<comment type="interaction">
    <interactant intactId="EBI-4480523">
        <id>G5EC23</id>
    </interactant>
    <interactant intactId="EBI-4480509">
        <id>D3YT50</id>
        <label>sir-2.1</label>
    </interactant>
    <organismsDiffer>false</organismsDiffer>
    <experiments>2</experiments>
</comment>
<comment type="subcellular location">
    <subcellularLocation>
        <location evidence="4 5 6">Nucleus</location>
    </subcellularLocation>
    <text evidence="4">Localizes to nucleus, except for nucleolus.</text>
</comment>
<comment type="developmental stage">
    <text evidence="3 4 6 10">Expressed in embryos and the L1 larval stage (at protein level) (PubMed:11341844, PubMed:18828672). Expressed in embryos and adults, with lower levels in L1-L4 larvae (PubMed:14629117, PubMed:9858614).</text>
</comment>
<comment type="PTM">
    <text evidence="3">Phosphorylated at multiple serine residues (PubMed:11341844). Phosphorylation is developmentally regulated, occurring in embryos but not L1 larvae (PubMed:11341844). Phosphorylation may be cell-cycle-regulated (PubMed:11341844).</text>
</comment>
<comment type="disruption phenotype">
    <text evidence="5 6 7 9">RNAi-mediated knockdown causes 20-30% increase in lifespan (PubMed:18828672). Causes smaller brood size (50% of wild type) and lower hatching rate (21% vs. 99%) at 12 degrees Celsius (PubMed:18043729). Increases intestinal expression of skn-1 target genes, including gcs-1, gst-4 and gst-7; increase abolished in an skn-1 mutant background (PubMed:22568582). Substantially reduces enrichment of hcf-1 on the efl-1 promoter and enhances enrichment of daf-16 at sod-3 and mtl-1 promoters (PubMed:18828672). Two-fold reduction in the level of embryonic expression of sup-35 in a lin-35 mutant background (PubMed:19521497). Partial suppression of larval lethality in both lin-35;ubc-18 and lin-35;pha-1 mutant backgrounds and suppression of pharynx-unattached phenotypes in a pha-1 mutant background (PubMed:19521497).</text>
</comment>
<name>HCF1_CAEEL</name>
<feature type="chain" id="PRO_0000454327" description="Host cell factor homolog hcf-1">
    <location>
        <begin position="1"/>
        <end position="782"/>
    </location>
</feature>
<feature type="repeat" description="Kelch 1" evidence="1">
    <location>
        <begin position="55"/>
        <end position="103"/>
    </location>
</feature>
<feature type="repeat" description="Kelch 2" evidence="1">
    <location>
        <begin position="105"/>
        <end position="151"/>
    </location>
</feature>
<feature type="repeat" description="Kelch 3" evidence="1">
    <location>
        <begin position="161"/>
        <end position="222"/>
    </location>
</feature>
<feature type="repeat" description="Kelch 4" evidence="1">
    <location>
        <begin position="227"/>
        <end position="271"/>
    </location>
</feature>
<feature type="repeat" description="Kelch 5" evidence="1">
    <location>
        <begin position="280"/>
        <end position="324"/>
    </location>
</feature>
<feature type="region of interest" description="Disordered" evidence="2">
    <location>
        <begin position="1"/>
        <end position="25"/>
    </location>
</feature>
<feature type="region of interest" description="Disordered" evidence="2">
    <location>
        <begin position="423"/>
        <end position="553"/>
    </location>
</feature>
<feature type="compositionally biased region" description="Basic and acidic residues" evidence="2">
    <location>
        <begin position="14"/>
        <end position="25"/>
    </location>
</feature>
<feature type="compositionally biased region" description="Polar residues" evidence="2">
    <location>
        <begin position="423"/>
        <end position="434"/>
    </location>
</feature>
<feature type="compositionally biased region" description="Polar residues" evidence="2">
    <location>
        <begin position="456"/>
        <end position="469"/>
    </location>
</feature>
<feature type="compositionally biased region" description="Polar residues" evidence="2">
    <location>
        <begin position="496"/>
        <end position="513"/>
    </location>
</feature>
<feature type="compositionally biased region" description="Acidic residues" evidence="2">
    <location>
        <begin position="537"/>
        <end position="552"/>
    </location>
</feature>
<feature type="modified residue" description="Phosphoserine" evidence="3">
    <location>
        <position position="423"/>
    </location>
</feature>
<feature type="modified residue" description="Phosphoserine" evidence="3">
    <location>
        <position position="431"/>
    </location>
</feature>
<feature type="modified residue" description="Phosphoserine" evidence="3">
    <location>
        <position position="449"/>
    </location>
</feature>
<feature type="modified residue" description="Phosphoserine" evidence="3">
    <location>
        <position position="498"/>
    </location>
</feature>
<feature type="mutagenesis site" description="Drastically reduces phosphorylation in vitro." evidence="3">
    <original>S</original>
    <variation>A</variation>
    <location>
        <position position="449"/>
    </location>
</feature>
<protein>
    <recommendedName>
        <fullName evidence="11">Host cell factor homolog hcf-1</fullName>
        <shortName evidence="11">HCF homolog</shortName>
    </recommendedName>
</protein>
<reference evidence="13" key="1">
    <citation type="journal article" date="1999" name="Mol. Cell. Biol.">
        <title>Selected elements of herpes simplex virus accessory factor HCF are highly conserved in Caenorhabditis elegans.</title>
        <authorList>
            <person name="Liu Y."/>
            <person name="Hengartner M.O."/>
            <person name="Herr W."/>
        </authorList>
    </citation>
    <scope>NUCLEOTIDE SEQUENCE [MRNA]</scope>
    <scope>DEVELOPMENTAL STAGE</scope>
</reference>
<reference evidence="14" key="2">
    <citation type="journal article" date="1998" name="Science">
        <title>Genome sequence of the nematode C. elegans: a platform for investigating biology.</title>
        <authorList>
            <consortium name="The C. elegans sequencing consortium"/>
        </authorList>
    </citation>
    <scope>NUCLEOTIDE SEQUENCE [LARGE SCALE GENOMIC DNA]</scope>
    <source>
        <strain evidence="14">Bristol N2</strain>
    </source>
</reference>
<reference evidence="12" key="3">
    <citation type="journal article" date="2001" name="Biochemistry">
        <title>Developmental and cell-cycle regulation of Caenorhabditis elegans HCF phosphorylation.</title>
        <authorList>
            <person name="Wysocka J."/>
            <person name="Liu Y."/>
            <person name="Kobayashi R."/>
            <person name="Herr W."/>
        </authorList>
    </citation>
    <scope>DEVELOPMENTAL STAGE</scope>
    <scope>PHOSPHORYLATION AT SER-423; SER-431; SER-449 AND SER-498</scope>
    <scope>MUTAGENESIS OF SER-449</scope>
</reference>
<reference evidence="12" key="4">
    <citation type="journal article" date="2003" name="Eur. J. Cell Biol.">
        <title>A C-terminal targeting signal controls differential compartmentalisation of Caenorhabditis elegans host cell factor (HCF) to the nucleus or mitochondria.</title>
        <authorList>
            <person name="Izeta A."/>
            <person name="Malcomber S."/>
            <person name="O'Rourke D."/>
            <person name="Hodgkin J."/>
            <person name="O'Hare P."/>
        </authorList>
    </citation>
    <scope>SUBCELLULAR LOCATION</scope>
    <scope>DEVELOPMENTAL STAGE</scope>
</reference>
<reference evidence="12" key="5">
    <citation type="journal article" date="2007" name="PLoS ONE">
        <title>Epigenetic regulation of histone H3 serine 10 phosphorylation status by HCF-1 proteins in C. elegans and mammalian cells.</title>
        <authorList>
            <person name="Lee S."/>
            <person name="Horn V."/>
            <person name="Julien E."/>
            <person name="Liu Y."/>
            <person name="Wysocka J."/>
            <person name="Bowerman B."/>
            <person name="Hengartner M.O."/>
            <person name="Herr W."/>
        </authorList>
    </citation>
    <scope>FUNCTION</scope>
    <scope>SUBCELLULAR LOCATION</scope>
    <scope>DISRUPTION PHENOTYPE</scope>
</reference>
<reference evidence="12" key="6">
    <citation type="journal article" date="2008" name="PLoS Biol.">
        <title>Caenorhabditis elegans HCF-1 functions in longevity maintenance as a DAF-16 regulator.</title>
        <authorList>
            <person name="Li J."/>
            <person name="Ebata A."/>
            <person name="Dong Y."/>
            <person name="Rizki G."/>
            <person name="Iwata T."/>
            <person name="Lee S.S."/>
        </authorList>
    </citation>
    <scope>FUNCTION</scope>
    <scope>INTERACTION WITH DAF-16</scope>
    <scope>SUBCELLULAR LOCATION</scope>
    <scope>DEVELOPMENTAL STAGE</scope>
    <scope>DISRUPTION PHENOTYPE</scope>
</reference>
<reference evidence="12" key="7">
    <citation type="journal article" date="2009" name="PLoS Genet.">
        <title>A mechanistic basis for the coordinated regulation of pharyngeal morphogenesis in Caenorhabditis elegans by LIN-35/Rb and UBC-18-ARI-1.</title>
        <authorList>
            <person name="Mani K."/>
            <person name="Fay D.S."/>
        </authorList>
    </citation>
    <scope>FUNCTION</scope>
    <scope>DISRUPTION PHENOTYPE</scope>
</reference>
<reference evidence="12" key="8">
    <citation type="journal article" date="2011" name="PLoS Genet.">
        <title>The evolutionarily conserved longevity determinants HCF-1 and SIR-2.1/SIRT1 collaborate to regulate DAF-16/FOXO.</title>
        <authorList>
            <person name="Rizki G."/>
            <person name="Iwata T.N."/>
            <person name="Li J."/>
            <person name="Riedel C.G."/>
            <person name="Picard C.L."/>
            <person name="Jan M."/>
            <person name="Murphy C.T."/>
            <person name="Lee S.S."/>
        </authorList>
    </citation>
    <scope>FUNCTION</scope>
    <scope>INTERACTION WITH SIR-2.1; FTT-2 AND PAR-5</scope>
</reference>
<reference evidence="12" key="9">
    <citation type="journal article" date="2012" name="Aging Cell">
        <title>Host cell factor 1 inhibits SKN-1 to modulate oxidative stress responses in Caenorhabditis elegans.</title>
        <authorList>
            <person name="Rizki G."/>
            <person name="Picard C.L."/>
            <person name="Pereyra C."/>
            <person name="Lee S.S."/>
        </authorList>
    </citation>
    <scope>FUNCTION</scope>
    <scope>DISRUPTION PHENOTYPE</scope>
</reference>